<accession>Q6A6Y0</accession>
<reference key="1">
    <citation type="journal article" date="2004" name="Science">
        <title>The complete genome sequence of Propionibacterium acnes, a commensal of human skin.</title>
        <authorList>
            <person name="Brueggemann H."/>
            <person name="Henne A."/>
            <person name="Hoster F."/>
            <person name="Liesegang H."/>
            <person name="Wiezer A."/>
            <person name="Strittmatter A."/>
            <person name="Hujer S."/>
            <person name="Duerre P."/>
            <person name="Gottschalk G."/>
        </authorList>
    </citation>
    <scope>NUCLEOTIDE SEQUENCE [LARGE SCALE GENOMIC DNA]</scope>
    <source>
        <strain>DSM 16379 / KPA171202</strain>
    </source>
</reference>
<gene>
    <name evidence="1" type="primary">sucC</name>
    <name type="ordered locus">PPA1755</name>
</gene>
<name>SUCC_CUTAK</name>
<organism>
    <name type="scientific">Cutibacterium acnes (strain DSM 16379 / KPA171202)</name>
    <name type="common">Propionibacterium acnes</name>
    <dbReference type="NCBI Taxonomy" id="267747"/>
    <lineage>
        <taxon>Bacteria</taxon>
        <taxon>Bacillati</taxon>
        <taxon>Actinomycetota</taxon>
        <taxon>Actinomycetes</taxon>
        <taxon>Propionibacteriales</taxon>
        <taxon>Propionibacteriaceae</taxon>
        <taxon>Cutibacterium</taxon>
    </lineage>
</organism>
<protein>
    <recommendedName>
        <fullName evidence="1">Succinate--CoA ligase [ADP-forming] subunit beta</fullName>
        <ecNumber evidence="1">6.2.1.5</ecNumber>
    </recommendedName>
    <alternativeName>
        <fullName evidence="1">Succinyl-CoA synthetase subunit beta</fullName>
        <shortName evidence="1">SCS-beta</shortName>
    </alternativeName>
</protein>
<proteinExistence type="inferred from homology"/>
<evidence type="ECO:0000255" key="1">
    <source>
        <dbReference type="HAMAP-Rule" id="MF_00558"/>
    </source>
</evidence>
<comment type="function">
    <text evidence="1">Succinyl-CoA synthetase functions in the citric acid cycle (TCA), coupling the hydrolysis of succinyl-CoA to the synthesis of either ATP or GTP and thus represents the only step of substrate-level phosphorylation in the TCA. The beta subunit provides nucleotide specificity of the enzyme and binds the substrate succinate, while the binding sites for coenzyme A and phosphate are found in the alpha subunit.</text>
</comment>
<comment type="catalytic activity">
    <reaction evidence="1">
        <text>succinate + ATP + CoA = succinyl-CoA + ADP + phosphate</text>
        <dbReference type="Rhea" id="RHEA:17661"/>
        <dbReference type="ChEBI" id="CHEBI:30031"/>
        <dbReference type="ChEBI" id="CHEBI:30616"/>
        <dbReference type="ChEBI" id="CHEBI:43474"/>
        <dbReference type="ChEBI" id="CHEBI:57287"/>
        <dbReference type="ChEBI" id="CHEBI:57292"/>
        <dbReference type="ChEBI" id="CHEBI:456216"/>
        <dbReference type="EC" id="6.2.1.5"/>
    </reaction>
    <physiologicalReaction direction="right-to-left" evidence="1">
        <dbReference type="Rhea" id="RHEA:17663"/>
    </physiologicalReaction>
</comment>
<comment type="catalytic activity">
    <reaction evidence="1">
        <text>GTP + succinate + CoA = succinyl-CoA + GDP + phosphate</text>
        <dbReference type="Rhea" id="RHEA:22120"/>
        <dbReference type="ChEBI" id="CHEBI:30031"/>
        <dbReference type="ChEBI" id="CHEBI:37565"/>
        <dbReference type="ChEBI" id="CHEBI:43474"/>
        <dbReference type="ChEBI" id="CHEBI:57287"/>
        <dbReference type="ChEBI" id="CHEBI:57292"/>
        <dbReference type="ChEBI" id="CHEBI:58189"/>
    </reaction>
    <physiologicalReaction direction="right-to-left" evidence="1">
        <dbReference type="Rhea" id="RHEA:22122"/>
    </physiologicalReaction>
</comment>
<comment type="cofactor">
    <cofactor evidence="1">
        <name>Mg(2+)</name>
        <dbReference type="ChEBI" id="CHEBI:18420"/>
    </cofactor>
    <text evidence="1">Binds 1 Mg(2+) ion per subunit.</text>
</comment>
<comment type="pathway">
    <text evidence="1">Carbohydrate metabolism; tricarboxylic acid cycle; succinate from succinyl-CoA (ligase route): step 1/1.</text>
</comment>
<comment type="subunit">
    <text evidence="1">Heterotetramer of two alpha and two beta subunits.</text>
</comment>
<comment type="similarity">
    <text evidence="1">Belongs to the succinate/malate CoA ligase beta subunit family.</text>
</comment>
<keyword id="KW-0067">ATP-binding</keyword>
<keyword id="KW-0436">Ligase</keyword>
<keyword id="KW-0460">Magnesium</keyword>
<keyword id="KW-0479">Metal-binding</keyword>
<keyword id="KW-0547">Nucleotide-binding</keyword>
<keyword id="KW-0816">Tricarboxylic acid cycle</keyword>
<sequence length="391" mass="41357">MDLYEYQARDLFEKHGVPVLRGIVAETPEQASEAAAKLGTPVVAVKAQVKVGGRGKAGGVKIAKSAAEAAERAEAILGMDIKGHTVHKVMVAEGADIAEEYYFSILLDRGERRYLAMCSREGGMDIETLAKERPEALAKVPVDPIDGVDDAKAREILSEAGFPDSEQDAIVPAVLKLWETYRDEDATLVEVNPMIKTGDGRILAIDGKMTVDNNASFRQPDHAGLVDRATTDPLELRAGELGLNYVKLDGNVGVIGNGAGLVMSTLDCVAYAGENFPGSPAPANFLDIGGGASAEIMANGLDLIMSDEQVRSVFVNVFGGITACDQVALGIKGALEKLGDKAVKPLVVRLDGNAVAEGRKILEEFNYPLVTMVSTMDEAASKAAELASKEA</sequence>
<dbReference type="EC" id="6.2.1.5" evidence="1"/>
<dbReference type="EMBL" id="AE017283">
    <property type="protein sequence ID" value="AAT83484.1"/>
    <property type="molecule type" value="Genomic_DNA"/>
</dbReference>
<dbReference type="RefSeq" id="WP_011183918.1">
    <property type="nucleotide sequence ID" value="NC_006085.1"/>
</dbReference>
<dbReference type="SMR" id="Q6A6Y0"/>
<dbReference type="EnsemblBacteria" id="AAT83484">
    <property type="protein sequence ID" value="AAT83484"/>
    <property type="gene ID" value="PPA1755"/>
</dbReference>
<dbReference type="KEGG" id="pac:PPA1755"/>
<dbReference type="PATRIC" id="fig|267747.3.peg.1811"/>
<dbReference type="eggNOG" id="COG0045">
    <property type="taxonomic scope" value="Bacteria"/>
</dbReference>
<dbReference type="HOGENOM" id="CLU_037430_4_0_11"/>
<dbReference type="UniPathway" id="UPA00223">
    <property type="reaction ID" value="UER00999"/>
</dbReference>
<dbReference type="Proteomes" id="UP000000603">
    <property type="component" value="Chromosome"/>
</dbReference>
<dbReference type="GO" id="GO:0005829">
    <property type="term" value="C:cytosol"/>
    <property type="evidence" value="ECO:0007669"/>
    <property type="project" value="TreeGrafter"/>
</dbReference>
<dbReference type="GO" id="GO:0042709">
    <property type="term" value="C:succinate-CoA ligase complex"/>
    <property type="evidence" value="ECO:0007669"/>
    <property type="project" value="TreeGrafter"/>
</dbReference>
<dbReference type="GO" id="GO:0005524">
    <property type="term" value="F:ATP binding"/>
    <property type="evidence" value="ECO:0007669"/>
    <property type="project" value="UniProtKB-UniRule"/>
</dbReference>
<dbReference type="GO" id="GO:0000287">
    <property type="term" value="F:magnesium ion binding"/>
    <property type="evidence" value="ECO:0007669"/>
    <property type="project" value="UniProtKB-UniRule"/>
</dbReference>
<dbReference type="GO" id="GO:0004775">
    <property type="term" value="F:succinate-CoA ligase (ADP-forming) activity"/>
    <property type="evidence" value="ECO:0007669"/>
    <property type="project" value="UniProtKB-UniRule"/>
</dbReference>
<dbReference type="GO" id="GO:0004776">
    <property type="term" value="F:succinate-CoA ligase (GDP-forming) activity"/>
    <property type="evidence" value="ECO:0007669"/>
    <property type="project" value="RHEA"/>
</dbReference>
<dbReference type="GO" id="GO:0006104">
    <property type="term" value="P:succinyl-CoA metabolic process"/>
    <property type="evidence" value="ECO:0007669"/>
    <property type="project" value="TreeGrafter"/>
</dbReference>
<dbReference type="GO" id="GO:0006099">
    <property type="term" value="P:tricarboxylic acid cycle"/>
    <property type="evidence" value="ECO:0007669"/>
    <property type="project" value="UniProtKB-UniRule"/>
</dbReference>
<dbReference type="FunFam" id="3.30.1490.20:FF:000014">
    <property type="entry name" value="Succinate--CoA ligase [ADP-forming] subunit beta"/>
    <property type="match status" value="1"/>
</dbReference>
<dbReference type="FunFam" id="3.30.470.20:FF:000002">
    <property type="entry name" value="Succinate--CoA ligase [ADP-forming] subunit beta"/>
    <property type="match status" value="1"/>
</dbReference>
<dbReference type="FunFam" id="3.40.50.261:FF:000007">
    <property type="entry name" value="Succinate--CoA ligase [ADP-forming] subunit beta"/>
    <property type="match status" value="1"/>
</dbReference>
<dbReference type="Gene3D" id="3.30.1490.20">
    <property type="entry name" value="ATP-grasp fold, A domain"/>
    <property type="match status" value="1"/>
</dbReference>
<dbReference type="Gene3D" id="3.30.470.20">
    <property type="entry name" value="ATP-grasp fold, B domain"/>
    <property type="match status" value="1"/>
</dbReference>
<dbReference type="Gene3D" id="3.40.50.261">
    <property type="entry name" value="Succinyl-CoA synthetase domains"/>
    <property type="match status" value="1"/>
</dbReference>
<dbReference type="HAMAP" id="MF_00558">
    <property type="entry name" value="Succ_CoA_beta"/>
    <property type="match status" value="1"/>
</dbReference>
<dbReference type="InterPro" id="IPR011761">
    <property type="entry name" value="ATP-grasp"/>
</dbReference>
<dbReference type="InterPro" id="IPR013650">
    <property type="entry name" value="ATP-grasp_succ-CoA_synth-type"/>
</dbReference>
<dbReference type="InterPro" id="IPR013815">
    <property type="entry name" value="ATP_grasp_subdomain_1"/>
</dbReference>
<dbReference type="InterPro" id="IPR017866">
    <property type="entry name" value="Succ-CoA_synthase_bsu_CS"/>
</dbReference>
<dbReference type="InterPro" id="IPR005811">
    <property type="entry name" value="SUCC_ACL_C"/>
</dbReference>
<dbReference type="InterPro" id="IPR005809">
    <property type="entry name" value="Succ_CoA_ligase-like_bsu"/>
</dbReference>
<dbReference type="InterPro" id="IPR016102">
    <property type="entry name" value="Succinyl-CoA_synth-like"/>
</dbReference>
<dbReference type="NCBIfam" id="NF001913">
    <property type="entry name" value="PRK00696.1"/>
    <property type="match status" value="1"/>
</dbReference>
<dbReference type="NCBIfam" id="TIGR01016">
    <property type="entry name" value="sucCoAbeta"/>
    <property type="match status" value="1"/>
</dbReference>
<dbReference type="PANTHER" id="PTHR11815:SF10">
    <property type="entry name" value="SUCCINATE--COA LIGASE [GDP-FORMING] SUBUNIT BETA, MITOCHONDRIAL"/>
    <property type="match status" value="1"/>
</dbReference>
<dbReference type="PANTHER" id="PTHR11815">
    <property type="entry name" value="SUCCINYL-COA SYNTHETASE BETA CHAIN"/>
    <property type="match status" value="1"/>
</dbReference>
<dbReference type="Pfam" id="PF08442">
    <property type="entry name" value="ATP-grasp_2"/>
    <property type="match status" value="1"/>
</dbReference>
<dbReference type="Pfam" id="PF00549">
    <property type="entry name" value="Ligase_CoA"/>
    <property type="match status" value="1"/>
</dbReference>
<dbReference type="PIRSF" id="PIRSF001554">
    <property type="entry name" value="SucCS_beta"/>
    <property type="match status" value="1"/>
</dbReference>
<dbReference type="SUPFAM" id="SSF56059">
    <property type="entry name" value="Glutathione synthetase ATP-binding domain-like"/>
    <property type="match status" value="1"/>
</dbReference>
<dbReference type="SUPFAM" id="SSF52210">
    <property type="entry name" value="Succinyl-CoA synthetase domains"/>
    <property type="match status" value="1"/>
</dbReference>
<dbReference type="PROSITE" id="PS50975">
    <property type="entry name" value="ATP_GRASP"/>
    <property type="match status" value="1"/>
</dbReference>
<dbReference type="PROSITE" id="PS01217">
    <property type="entry name" value="SUCCINYL_COA_LIG_3"/>
    <property type="match status" value="1"/>
</dbReference>
<feature type="chain" id="PRO_1000082161" description="Succinate--CoA ligase [ADP-forming] subunit beta">
    <location>
        <begin position="1"/>
        <end position="391"/>
    </location>
</feature>
<feature type="domain" description="ATP-grasp" evidence="1">
    <location>
        <begin position="9"/>
        <end position="237"/>
    </location>
</feature>
<feature type="binding site" evidence="1">
    <location>
        <position position="46"/>
    </location>
    <ligand>
        <name>ATP</name>
        <dbReference type="ChEBI" id="CHEBI:30616"/>
    </ligand>
</feature>
<feature type="binding site" evidence="1">
    <location>
        <begin position="53"/>
        <end position="55"/>
    </location>
    <ligand>
        <name>ATP</name>
        <dbReference type="ChEBI" id="CHEBI:30616"/>
    </ligand>
</feature>
<feature type="binding site" evidence="1">
    <location>
        <position position="95"/>
    </location>
    <ligand>
        <name>ATP</name>
        <dbReference type="ChEBI" id="CHEBI:30616"/>
    </ligand>
</feature>
<feature type="binding site" evidence="1">
    <location>
        <position position="100"/>
    </location>
    <ligand>
        <name>ATP</name>
        <dbReference type="ChEBI" id="CHEBI:30616"/>
    </ligand>
</feature>
<feature type="binding site" evidence="1">
    <location>
        <position position="192"/>
    </location>
    <ligand>
        <name>Mg(2+)</name>
        <dbReference type="ChEBI" id="CHEBI:18420"/>
    </ligand>
</feature>
<feature type="binding site" evidence="1">
    <location>
        <position position="206"/>
    </location>
    <ligand>
        <name>Mg(2+)</name>
        <dbReference type="ChEBI" id="CHEBI:18420"/>
    </ligand>
</feature>
<feature type="binding site" evidence="1">
    <location>
        <position position="257"/>
    </location>
    <ligand>
        <name>substrate</name>
        <note>ligand shared with subunit alpha</note>
    </ligand>
</feature>
<feature type="binding site" evidence="1">
    <location>
        <begin position="320"/>
        <end position="322"/>
    </location>
    <ligand>
        <name>substrate</name>
        <note>ligand shared with subunit alpha</note>
    </ligand>
</feature>